<feature type="transit peptide" description="Mitochondrion" evidence="2">
    <location>
        <begin position="1"/>
        <end position="33"/>
    </location>
</feature>
<feature type="chain" id="PRO_0000235292" description="Mitochondrial intermembrane space import and assembly protein 40">
    <location>
        <begin position="34"/>
        <end position="298"/>
    </location>
</feature>
<feature type="topological domain" description="Mitochondrial matrix" evidence="2">
    <location>
        <begin position="34"/>
        <end position="52"/>
    </location>
</feature>
<feature type="transmembrane region" description="Helical; Signal-anchor for type II membrane protein" evidence="2">
    <location>
        <begin position="53"/>
        <end position="69"/>
    </location>
</feature>
<feature type="topological domain" description="Mitochondrial intermembrane" evidence="2">
    <location>
        <begin position="70"/>
        <end position="298"/>
    </location>
</feature>
<feature type="domain" description="CHCH" evidence="3">
    <location>
        <begin position="199"/>
        <end position="243"/>
    </location>
</feature>
<feature type="region of interest" description="Disordered" evidence="4">
    <location>
        <begin position="101"/>
        <end position="159"/>
    </location>
</feature>
<feature type="region of interest" description="Disordered" evidence="4">
    <location>
        <begin position="248"/>
        <end position="298"/>
    </location>
</feature>
<feature type="short sequence motif" description="Cx9C motif 1" evidence="3">
    <location>
        <begin position="202"/>
        <end position="212"/>
    </location>
</feature>
<feature type="short sequence motif" description="Cx9C motif 2" evidence="3">
    <location>
        <begin position="225"/>
        <end position="235"/>
    </location>
</feature>
<feature type="compositionally biased region" description="Low complexity" evidence="4">
    <location>
        <begin position="110"/>
        <end position="121"/>
    </location>
</feature>
<feature type="compositionally biased region" description="Low complexity" evidence="4">
    <location>
        <begin position="256"/>
        <end position="266"/>
    </location>
</feature>
<feature type="compositionally biased region" description="Basic and acidic residues" evidence="4">
    <location>
        <begin position="267"/>
        <end position="280"/>
    </location>
</feature>
<feature type="disulfide bond" description="Redox-active" evidence="1">
    <location>
        <begin position="191"/>
        <end position="193"/>
    </location>
</feature>
<feature type="disulfide bond" evidence="3">
    <location>
        <begin position="202"/>
        <end position="235"/>
    </location>
</feature>
<feature type="disulfide bond" evidence="3">
    <location>
        <begin position="212"/>
        <end position="225"/>
    </location>
</feature>
<keyword id="KW-1015">Disulfide bond</keyword>
<keyword id="KW-0472">Membrane</keyword>
<keyword id="KW-0496">Mitochondrion</keyword>
<keyword id="KW-0999">Mitochondrion inner membrane</keyword>
<keyword id="KW-0560">Oxidoreductase</keyword>
<keyword id="KW-0653">Protein transport</keyword>
<keyword id="KW-0676">Redox-active center</keyword>
<keyword id="KW-1185">Reference proteome</keyword>
<keyword id="KW-0735">Signal-anchor</keyword>
<keyword id="KW-0809">Transit peptide</keyword>
<keyword id="KW-0811">Translocation</keyword>
<keyword id="KW-0812">Transmembrane</keyword>
<keyword id="KW-1133">Transmembrane helix</keyword>
<keyword id="KW-0813">Transport</keyword>
<comment type="function">
    <text evidence="1">Required for the import and folding of small cysteine-containing proteins (small Tim) in the mitochondrial intermembrane space (IMS). Forms a redox cycle with ERV1 that involves a disulfide relay system. Precursor proteins to be imported into the IMS are translocated in their reduced form into the mitochondria. The oxidized form of MIA40 forms a transient intermolecular disulfide bridge with the reduced precursor protein, resulting in oxidation of the precursor protein that now contains an intramolecular disulfide bond and is able to undergo folding in the IMS (By similarity).</text>
</comment>
<comment type="cofactor">
    <cofactor evidence="1">
        <name>Cu(2+)</name>
        <dbReference type="ChEBI" id="CHEBI:29036"/>
    </cofactor>
    <cofactor evidence="1">
        <name>Zn(2+)</name>
        <dbReference type="ChEBI" id="CHEBI:29105"/>
    </cofactor>
    <text evidence="1">Cu(2+) or Zn(2+).</text>
</comment>
<comment type="subunit">
    <text evidence="1">Monomer.</text>
</comment>
<comment type="subcellular location">
    <subcellularLocation>
        <location evidence="1">Mitochondrion inner membrane</location>
        <topology evidence="1">Single-pass type II membrane protein</topology>
        <orientation evidence="1">Intermembrane side</orientation>
    </subcellularLocation>
</comment>
<comment type="domain">
    <text evidence="1">The CHCH domain contains a conserved twin Cys-X(9)-Cys motif which is required for import and stability of MIA40 in mitochondria.</text>
</comment>
<protein>
    <recommendedName>
        <fullName>Mitochondrial intermembrane space import and assembly protein 40</fullName>
    </recommendedName>
    <alternativeName>
        <fullName>Mitochondrial import inner membrane translocase TIM40</fullName>
    </alternativeName>
</protein>
<name>MIA40_NEUCR</name>
<gene>
    <name type="primary">mia-40</name>
    <name type="synonym">tim-40</name>
    <name type="ORF">NCU04945</name>
</gene>
<sequence>MYRTALRPSQSALRAIRSTTSPSALVSSGARRFASTTSAPKKKSTWKGAAVRWGLAVAAVYYYNTSPIFSDELPETAGTAPSQLTDADLPTVDAIVEEKRRQAAEHAAARKAAQAAAKAAATPATPSESVEEQITKAEAEAEAVPEGDSKPRSESTEGVIPEAGASPEALQEEADAQGAFNPETGEINWDCPCLGGMAHGPCGEEFKAAFSCFVYSTEEPKGMDCIEKFSHMQDCFRKYPEVYGAELADDEEAERASAAAPAAEGTPAKEEPVENKKEEALEPATHDATAANNNKKQQ</sequence>
<organism>
    <name type="scientific">Neurospora crassa (strain ATCC 24698 / 74-OR23-1A / CBS 708.71 / DSM 1257 / FGSC 987)</name>
    <dbReference type="NCBI Taxonomy" id="367110"/>
    <lineage>
        <taxon>Eukaryota</taxon>
        <taxon>Fungi</taxon>
        <taxon>Dikarya</taxon>
        <taxon>Ascomycota</taxon>
        <taxon>Pezizomycotina</taxon>
        <taxon>Sordariomycetes</taxon>
        <taxon>Sordariomycetidae</taxon>
        <taxon>Sordariales</taxon>
        <taxon>Sordariaceae</taxon>
        <taxon>Neurospora</taxon>
    </lineage>
</organism>
<dbReference type="EMBL" id="CM002239">
    <property type="protein sequence ID" value="EAA30157.1"/>
    <property type="molecule type" value="Genomic_DNA"/>
</dbReference>
<dbReference type="RefSeq" id="XP_959393.1">
    <property type="nucleotide sequence ID" value="XM_954300.2"/>
</dbReference>
<dbReference type="SMR" id="Q7S3S2"/>
<dbReference type="STRING" id="367110.Q7S3S2"/>
<dbReference type="PaxDb" id="5141-EFNCRP00000004869"/>
<dbReference type="EnsemblFungi" id="EAA30157">
    <property type="protein sequence ID" value="EAA30157"/>
    <property type="gene ID" value="NCU04945"/>
</dbReference>
<dbReference type="GeneID" id="3875515"/>
<dbReference type="KEGG" id="ncr:NCU04945"/>
<dbReference type="VEuPathDB" id="FungiDB:NCU04945"/>
<dbReference type="HOGENOM" id="CLU_054990_0_0_1"/>
<dbReference type="InParanoid" id="Q7S3S2"/>
<dbReference type="OMA" id="PRSWKNT"/>
<dbReference type="OrthoDB" id="7481291at2759"/>
<dbReference type="Proteomes" id="UP000001805">
    <property type="component" value="Chromosome 4, Linkage Group IV"/>
</dbReference>
<dbReference type="GO" id="GO:0005743">
    <property type="term" value="C:mitochondrial inner membrane"/>
    <property type="evidence" value="ECO:0007669"/>
    <property type="project" value="UniProtKB-SubCell"/>
</dbReference>
<dbReference type="GO" id="GO:0005758">
    <property type="term" value="C:mitochondrial intermembrane space"/>
    <property type="evidence" value="ECO:0000318"/>
    <property type="project" value="GO_Central"/>
</dbReference>
<dbReference type="GO" id="GO:0015035">
    <property type="term" value="F:protein-disulfide reductase activity"/>
    <property type="evidence" value="ECO:0000318"/>
    <property type="project" value="GO_Central"/>
</dbReference>
<dbReference type="GO" id="GO:0045041">
    <property type="term" value="P:protein import into mitochondrial intermembrane space"/>
    <property type="evidence" value="ECO:0000318"/>
    <property type="project" value="GO_Central"/>
</dbReference>
<dbReference type="FunFam" id="1.10.287.2900:FF:000002">
    <property type="entry name" value="Mitochondrial intermembrane space import and assembly protein"/>
    <property type="match status" value="1"/>
</dbReference>
<dbReference type="Gene3D" id="1.10.287.2900">
    <property type="match status" value="1"/>
</dbReference>
<dbReference type="InterPro" id="IPR010625">
    <property type="entry name" value="CHCH"/>
</dbReference>
<dbReference type="InterPro" id="IPR039289">
    <property type="entry name" value="CHCHD4"/>
</dbReference>
<dbReference type="PANTHER" id="PTHR21622">
    <property type="entry name" value="COILED-COIL-HELIX-COILED-COIL-HELIX DOMAIN CONTAINING 4"/>
    <property type="match status" value="1"/>
</dbReference>
<dbReference type="PANTHER" id="PTHR21622:SF0">
    <property type="entry name" value="COILED-COIL-HELIX-COILED-COIL-HELIX DOMAIN CONTAINING 4"/>
    <property type="match status" value="1"/>
</dbReference>
<dbReference type="Pfam" id="PF06747">
    <property type="entry name" value="CHCH"/>
    <property type="match status" value="1"/>
</dbReference>
<dbReference type="PROSITE" id="PS51808">
    <property type="entry name" value="CHCH"/>
    <property type="match status" value="1"/>
</dbReference>
<evidence type="ECO:0000250" key="1"/>
<evidence type="ECO:0000255" key="2"/>
<evidence type="ECO:0000255" key="3">
    <source>
        <dbReference type="PROSITE-ProRule" id="PRU01150"/>
    </source>
</evidence>
<evidence type="ECO:0000256" key="4">
    <source>
        <dbReference type="SAM" id="MobiDB-lite"/>
    </source>
</evidence>
<proteinExistence type="inferred from homology"/>
<accession>Q7S3S2</accession>
<reference key="1">
    <citation type="journal article" date="2003" name="Nature">
        <title>The genome sequence of the filamentous fungus Neurospora crassa.</title>
        <authorList>
            <person name="Galagan J.E."/>
            <person name="Calvo S.E."/>
            <person name="Borkovich K.A."/>
            <person name="Selker E.U."/>
            <person name="Read N.D."/>
            <person name="Jaffe D.B."/>
            <person name="FitzHugh W."/>
            <person name="Ma L.-J."/>
            <person name="Smirnov S."/>
            <person name="Purcell S."/>
            <person name="Rehman B."/>
            <person name="Elkins T."/>
            <person name="Engels R."/>
            <person name="Wang S."/>
            <person name="Nielsen C.B."/>
            <person name="Butler J."/>
            <person name="Endrizzi M."/>
            <person name="Qui D."/>
            <person name="Ianakiev P."/>
            <person name="Bell-Pedersen D."/>
            <person name="Nelson M.A."/>
            <person name="Werner-Washburne M."/>
            <person name="Selitrennikoff C.P."/>
            <person name="Kinsey J.A."/>
            <person name="Braun E.L."/>
            <person name="Zelter A."/>
            <person name="Schulte U."/>
            <person name="Kothe G.O."/>
            <person name="Jedd G."/>
            <person name="Mewes H.-W."/>
            <person name="Staben C."/>
            <person name="Marcotte E."/>
            <person name="Greenberg D."/>
            <person name="Roy A."/>
            <person name="Foley K."/>
            <person name="Naylor J."/>
            <person name="Stange-Thomann N."/>
            <person name="Barrett R."/>
            <person name="Gnerre S."/>
            <person name="Kamal M."/>
            <person name="Kamvysselis M."/>
            <person name="Mauceli E.W."/>
            <person name="Bielke C."/>
            <person name="Rudd S."/>
            <person name="Frishman D."/>
            <person name="Krystofova S."/>
            <person name="Rasmussen C."/>
            <person name="Metzenberg R.L."/>
            <person name="Perkins D.D."/>
            <person name="Kroken S."/>
            <person name="Cogoni C."/>
            <person name="Macino G."/>
            <person name="Catcheside D.E.A."/>
            <person name="Li W."/>
            <person name="Pratt R.J."/>
            <person name="Osmani S.A."/>
            <person name="DeSouza C.P.C."/>
            <person name="Glass N.L."/>
            <person name="Orbach M.J."/>
            <person name="Berglund J.A."/>
            <person name="Voelker R."/>
            <person name="Yarden O."/>
            <person name="Plamann M."/>
            <person name="Seiler S."/>
            <person name="Dunlap J.C."/>
            <person name="Radford A."/>
            <person name="Aramayo R."/>
            <person name="Natvig D.O."/>
            <person name="Alex L.A."/>
            <person name="Mannhaupt G."/>
            <person name="Ebbole D.J."/>
            <person name="Freitag M."/>
            <person name="Paulsen I."/>
            <person name="Sachs M.S."/>
            <person name="Lander E.S."/>
            <person name="Nusbaum C."/>
            <person name="Birren B.W."/>
        </authorList>
    </citation>
    <scope>NUCLEOTIDE SEQUENCE [LARGE SCALE GENOMIC DNA]</scope>
    <source>
        <strain>ATCC 24698 / 74-OR23-1A / CBS 708.71 / DSM 1257 / FGSC 987</strain>
    </source>
</reference>